<protein>
    <recommendedName>
        <fullName evidence="1">Large ribosomal subunit protein uL13</fullName>
    </recommendedName>
    <alternativeName>
        <fullName evidence="2">50S ribosomal protein L13</fullName>
    </alternativeName>
</protein>
<evidence type="ECO:0000255" key="1">
    <source>
        <dbReference type="HAMAP-Rule" id="MF_01366"/>
    </source>
</evidence>
<evidence type="ECO:0000305" key="2"/>
<keyword id="KW-0687">Ribonucleoprotein</keyword>
<keyword id="KW-0689">Ribosomal protein</keyword>
<name>RL13_BACC2</name>
<gene>
    <name evidence="1" type="primary">rplM</name>
    <name type="ordered locus">BCG9842_B5161</name>
</gene>
<organism>
    <name type="scientific">Bacillus cereus (strain G9842)</name>
    <dbReference type="NCBI Taxonomy" id="405531"/>
    <lineage>
        <taxon>Bacteria</taxon>
        <taxon>Bacillati</taxon>
        <taxon>Bacillota</taxon>
        <taxon>Bacilli</taxon>
        <taxon>Bacillales</taxon>
        <taxon>Bacillaceae</taxon>
        <taxon>Bacillus</taxon>
        <taxon>Bacillus cereus group</taxon>
    </lineage>
</organism>
<accession>B7IT52</accession>
<comment type="function">
    <text evidence="1">This protein is one of the early assembly proteins of the 50S ribosomal subunit, although it is not seen to bind rRNA by itself. It is important during the early stages of 50S assembly.</text>
</comment>
<comment type="subunit">
    <text evidence="1">Part of the 50S ribosomal subunit.</text>
</comment>
<comment type="similarity">
    <text evidence="1">Belongs to the universal ribosomal protein uL13 family.</text>
</comment>
<reference key="1">
    <citation type="submission" date="2008-10" db="EMBL/GenBank/DDBJ databases">
        <title>Genome sequence of Bacillus cereus G9842.</title>
        <authorList>
            <person name="Dodson R.J."/>
            <person name="Durkin A.S."/>
            <person name="Rosovitz M.J."/>
            <person name="Rasko D.A."/>
            <person name="Hoffmaster A."/>
            <person name="Ravel J."/>
            <person name="Sutton G."/>
        </authorList>
    </citation>
    <scope>NUCLEOTIDE SEQUENCE [LARGE SCALE GENOMIC DNA]</scope>
    <source>
        <strain>G9842</strain>
    </source>
</reference>
<feature type="chain" id="PRO_1000144088" description="Large ribosomal subunit protein uL13">
    <location>
        <begin position="1"/>
        <end position="145"/>
    </location>
</feature>
<sequence>MRTTFMAKANEVERKWYVVDAEGQTLGRLSTEVASILRGKNKPTFTPHVDTGDHVIIINAEKIHLTGNKLNDKIYYRHTNHPGGLKQRTALEMRTNYPVQMLELAIKGMLPKGRLGRQVSKKLNVYAGAEHPHQAQKPEVYELRG</sequence>
<proteinExistence type="inferred from homology"/>
<dbReference type="EMBL" id="CP001186">
    <property type="protein sequence ID" value="ACK97527.1"/>
    <property type="molecule type" value="Genomic_DNA"/>
</dbReference>
<dbReference type="RefSeq" id="WP_001260795.1">
    <property type="nucleotide sequence ID" value="NC_011772.1"/>
</dbReference>
<dbReference type="SMR" id="B7IT52"/>
<dbReference type="GeneID" id="92887836"/>
<dbReference type="KEGG" id="bcg:BCG9842_B5161"/>
<dbReference type="HOGENOM" id="CLU_082184_2_2_9"/>
<dbReference type="Proteomes" id="UP000006744">
    <property type="component" value="Chromosome"/>
</dbReference>
<dbReference type="GO" id="GO:0022625">
    <property type="term" value="C:cytosolic large ribosomal subunit"/>
    <property type="evidence" value="ECO:0007669"/>
    <property type="project" value="TreeGrafter"/>
</dbReference>
<dbReference type="GO" id="GO:0003729">
    <property type="term" value="F:mRNA binding"/>
    <property type="evidence" value="ECO:0007669"/>
    <property type="project" value="TreeGrafter"/>
</dbReference>
<dbReference type="GO" id="GO:0003735">
    <property type="term" value="F:structural constituent of ribosome"/>
    <property type="evidence" value="ECO:0007669"/>
    <property type="project" value="InterPro"/>
</dbReference>
<dbReference type="GO" id="GO:0017148">
    <property type="term" value="P:negative regulation of translation"/>
    <property type="evidence" value="ECO:0007669"/>
    <property type="project" value="TreeGrafter"/>
</dbReference>
<dbReference type="GO" id="GO:0006412">
    <property type="term" value="P:translation"/>
    <property type="evidence" value="ECO:0007669"/>
    <property type="project" value="UniProtKB-UniRule"/>
</dbReference>
<dbReference type="CDD" id="cd00392">
    <property type="entry name" value="Ribosomal_L13"/>
    <property type="match status" value="1"/>
</dbReference>
<dbReference type="FunFam" id="3.90.1180.10:FF:000001">
    <property type="entry name" value="50S ribosomal protein L13"/>
    <property type="match status" value="1"/>
</dbReference>
<dbReference type="Gene3D" id="3.90.1180.10">
    <property type="entry name" value="Ribosomal protein L13"/>
    <property type="match status" value="1"/>
</dbReference>
<dbReference type="HAMAP" id="MF_01366">
    <property type="entry name" value="Ribosomal_uL13"/>
    <property type="match status" value="1"/>
</dbReference>
<dbReference type="InterPro" id="IPR005822">
    <property type="entry name" value="Ribosomal_uL13"/>
</dbReference>
<dbReference type="InterPro" id="IPR005823">
    <property type="entry name" value="Ribosomal_uL13_bac-type"/>
</dbReference>
<dbReference type="InterPro" id="IPR023563">
    <property type="entry name" value="Ribosomal_uL13_CS"/>
</dbReference>
<dbReference type="InterPro" id="IPR036899">
    <property type="entry name" value="Ribosomal_uL13_sf"/>
</dbReference>
<dbReference type="NCBIfam" id="TIGR01066">
    <property type="entry name" value="rplM_bact"/>
    <property type="match status" value="1"/>
</dbReference>
<dbReference type="PANTHER" id="PTHR11545:SF2">
    <property type="entry name" value="LARGE RIBOSOMAL SUBUNIT PROTEIN UL13M"/>
    <property type="match status" value="1"/>
</dbReference>
<dbReference type="PANTHER" id="PTHR11545">
    <property type="entry name" value="RIBOSOMAL PROTEIN L13"/>
    <property type="match status" value="1"/>
</dbReference>
<dbReference type="Pfam" id="PF00572">
    <property type="entry name" value="Ribosomal_L13"/>
    <property type="match status" value="1"/>
</dbReference>
<dbReference type="PIRSF" id="PIRSF002181">
    <property type="entry name" value="Ribosomal_L13"/>
    <property type="match status" value="1"/>
</dbReference>
<dbReference type="SUPFAM" id="SSF52161">
    <property type="entry name" value="Ribosomal protein L13"/>
    <property type="match status" value="1"/>
</dbReference>
<dbReference type="PROSITE" id="PS00783">
    <property type="entry name" value="RIBOSOMAL_L13"/>
    <property type="match status" value="1"/>
</dbReference>